<proteinExistence type="evidence at protein level"/>
<reference key="1">
    <citation type="journal article" date="2000" name="Dev. Biol.">
        <title>Cardiac expression of the ventricle-specific homeobox gene Irx4 is modulated by Nkx2-5 and dHand.</title>
        <authorList>
            <person name="Bruneau B.G."/>
            <person name="Bao Z.-Z."/>
            <person name="Tanaka M."/>
            <person name="Schott J.-J."/>
            <person name="Izumo S."/>
            <person name="Cepko C.L."/>
            <person name="Seidman J.G."/>
            <person name="Seidman C.E."/>
        </authorList>
    </citation>
    <scope>NUCLEOTIDE SEQUENCE [MRNA] (ISOFORM 1)</scope>
</reference>
<reference key="2">
    <citation type="submission" date="2003-07" db="EMBL/GenBank/DDBJ databases">
        <title>Characterization of the human homeobox two-cluster Iroquois gene family.</title>
        <authorList>
            <person name="Hansen L."/>
            <person name="Wu Q."/>
            <person name="Tommerup N."/>
        </authorList>
    </citation>
    <scope>NUCLEOTIDE SEQUENCE [GENOMIC DNA]</scope>
</reference>
<reference key="3">
    <citation type="journal article" date="2012" name="Hum. Mol. Genet.">
        <title>IRX4 at 5p15 suppresses prostate cancer growth through the interaction with vitamin D receptor, conferring prostate cancer susceptibility.</title>
        <authorList>
            <person name="Nguyen H.H."/>
            <person name="Takata R."/>
            <person name="Akamatsu S."/>
            <person name="Shigemizu D."/>
            <person name="Tsunoda T."/>
            <person name="Furihata M."/>
            <person name="Takahashi A."/>
            <person name="Kubo M."/>
            <person name="Kamatani N."/>
            <person name="Ogawa O."/>
            <person name="Fujioka T."/>
            <person name="Nakamura Y."/>
            <person name="Nakagawa H."/>
        </authorList>
    </citation>
    <scope>NUCLEOTIDE SEQUENCE [MRNA] (ISOFORMS 1 AND 2)</scope>
    <scope>ALTERNATIVE SPLICING</scope>
    <scope>INTERACTION WITH VDR</scope>
    <source>
        <tissue>Prostate</tissue>
    </source>
</reference>
<reference key="4">
    <citation type="submission" date="2005-09" db="EMBL/GenBank/DDBJ databases">
        <authorList>
            <person name="Mural R.J."/>
            <person name="Istrail S."/>
            <person name="Sutton G.G."/>
            <person name="Florea L."/>
            <person name="Halpern A.L."/>
            <person name="Mobarry C.M."/>
            <person name="Lippert R."/>
            <person name="Walenz B."/>
            <person name="Shatkay H."/>
            <person name="Dew I."/>
            <person name="Miller J.R."/>
            <person name="Flanigan M.J."/>
            <person name="Edwards N.J."/>
            <person name="Bolanos R."/>
            <person name="Fasulo D."/>
            <person name="Halldorsson B.V."/>
            <person name="Hannenhalli S."/>
            <person name="Turner R."/>
            <person name="Yooseph S."/>
            <person name="Lu F."/>
            <person name="Nusskern D.R."/>
            <person name="Shue B.C."/>
            <person name="Zheng X.H."/>
            <person name="Zhong F."/>
            <person name="Delcher A.L."/>
            <person name="Huson D.H."/>
            <person name="Kravitz S.A."/>
            <person name="Mouchard L."/>
            <person name="Reinert K."/>
            <person name="Remington K.A."/>
            <person name="Clark A.G."/>
            <person name="Waterman M.S."/>
            <person name="Eichler E.E."/>
            <person name="Adams M.D."/>
            <person name="Hunkapiller M.W."/>
            <person name="Myers E.W."/>
            <person name="Venter J.C."/>
        </authorList>
    </citation>
    <scope>NUCLEOTIDE SEQUENCE [LARGE SCALE GENOMIC DNA]</scope>
</reference>
<reference key="5">
    <citation type="journal article" date="2004" name="Genome Res.">
        <title>The status, quality, and expansion of the NIH full-length cDNA project: the Mammalian Gene Collection (MGC).</title>
        <authorList>
            <consortium name="The MGC Project Team"/>
        </authorList>
    </citation>
    <scope>NUCLEOTIDE SEQUENCE [LARGE SCALE MRNA] (ISOFORM 1)</scope>
    <scope>VARIANT THR-119</scope>
    <source>
        <tissue>Placenta</tissue>
    </source>
</reference>
<reference key="6">
    <citation type="submission" date="1997-03" db="EMBL/GenBank/DDBJ databases">
        <title>IRX: a new family of human homeobox genes from the breast.</title>
        <authorList>
            <person name="Lewis M.T."/>
            <person name="Strickland P.A."/>
            <person name="Ross S."/>
            <person name="Snyder C.J."/>
            <person name="Daniel C.W."/>
        </authorList>
    </citation>
    <scope>NUCLEOTIDE SEQUENCE [MRNA] OF 80-191 (ISOFORM 1)</scope>
</reference>
<comment type="function">
    <text>Likely to be an important mediator of ventricular differentiation during cardiac development.</text>
</comment>
<comment type="subunit">
    <text evidence="4">Interacts with the vitamin D receptor VDR but doesn't affect its transactivation activity.</text>
</comment>
<comment type="interaction">
    <interactant intactId="EBI-12073510">
        <id>P78413</id>
    </interactant>
    <interactant intactId="EBI-12029004">
        <id>P78424</id>
        <label>POU6F2</label>
    </interactant>
    <organismsDiffer>false</organismsDiffer>
    <experiments>3</experiments>
</comment>
<comment type="subcellular location">
    <subcellularLocation>
        <location evidence="6">Nucleus</location>
    </subcellularLocation>
</comment>
<comment type="alternative products">
    <event type="alternative splicing"/>
    <isoform>
        <id>P78413-1</id>
        <name>1</name>
        <sequence type="displayed"/>
    </isoform>
    <isoform>
        <id>P78413-2</id>
        <name>2</name>
        <sequence type="described" ref="VSP_054304"/>
    </isoform>
</comment>
<comment type="tissue specificity">
    <text>Predominantly expressed in cardiac ventricles.</text>
</comment>
<comment type="similarity">
    <text evidence="6">Belongs to the TALE/IRO homeobox family.</text>
</comment>
<organism>
    <name type="scientific">Homo sapiens</name>
    <name type="common">Human</name>
    <dbReference type="NCBI Taxonomy" id="9606"/>
    <lineage>
        <taxon>Eukaryota</taxon>
        <taxon>Metazoa</taxon>
        <taxon>Chordata</taxon>
        <taxon>Craniata</taxon>
        <taxon>Vertebrata</taxon>
        <taxon>Euteleostomi</taxon>
        <taxon>Mammalia</taxon>
        <taxon>Eutheria</taxon>
        <taxon>Euarchontoglires</taxon>
        <taxon>Primates</taxon>
        <taxon>Haplorrhini</taxon>
        <taxon>Catarrhini</taxon>
        <taxon>Hominidae</taxon>
        <taxon>Homo</taxon>
    </lineage>
</organism>
<protein>
    <recommendedName>
        <fullName>Iroquois-class homeodomain protein IRX-4</fullName>
    </recommendedName>
    <alternativeName>
        <fullName>Homeodomain protein IRXA3</fullName>
    </alternativeName>
    <alternativeName>
        <fullName>Iroquois homeobox protein 4</fullName>
    </alternativeName>
</protein>
<name>IRX4_HUMAN</name>
<accession>P78413</accession>
<accession>B2RMW5</accession>
<accession>D3DTC5</accession>
<accession>H1AFL0</accession>
<accession>H1AFL1</accession>
<accession>Q2NL64</accession>
<accession>Q9UHR2</accession>
<evidence type="ECO:0000255" key="1">
    <source>
        <dbReference type="PROSITE-ProRule" id="PRU00108"/>
    </source>
</evidence>
<evidence type="ECO:0000256" key="2">
    <source>
        <dbReference type="SAM" id="MobiDB-lite"/>
    </source>
</evidence>
<evidence type="ECO:0000269" key="3">
    <source>
    </source>
</evidence>
<evidence type="ECO:0000269" key="4">
    <source>
    </source>
</evidence>
<evidence type="ECO:0000303" key="5">
    <source>
    </source>
</evidence>
<evidence type="ECO:0000305" key="6"/>
<gene>
    <name type="primary">IRX4</name>
    <name type="synonym">IRXA3</name>
</gene>
<keyword id="KW-0025">Alternative splicing</keyword>
<keyword id="KW-0238">DNA-binding</keyword>
<keyword id="KW-0371">Homeobox</keyword>
<keyword id="KW-0539">Nucleus</keyword>
<keyword id="KW-1267">Proteomics identification</keyword>
<keyword id="KW-1185">Reference proteome</keyword>
<feature type="chain" id="PRO_0000049157" description="Iroquois-class homeodomain protein IRX-4">
    <location>
        <begin position="1"/>
        <end position="519"/>
    </location>
</feature>
<feature type="DNA-binding region" description="Homeobox; TALE-type" evidence="1">
    <location>
        <begin position="143"/>
        <end position="204"/>
    </location>
</feature>
<feature type="region of interest" description="Disordered" evidence="2">
    <location>
        <begin position="204"/>
        <end position="298"/>
    </location>
</feature>
<feature type="compositionally biased region" description="Basic and acidic residues" evidence="2">
    <location>
        <begin position="213"/>
        <end position="222"/>
    </location>
</feature>
<feature type="compositionally biased region" description="Acidic residues" evidence="2">
    <location>
        <begin position="223"/>
        <end position="235"/>
    </location>
</feature>
<feature type="compositionally biased region" description="Acidic residues" evidence="2">
    <location>
        <begin position="257"/>
        <end position="267"/>
    </location>
</feature>
<feature type="splice variant" id="VSP_054304" description="In isoform 2." evidence="5">
    <original>R</original>
    <variation>RIKRLGGHPHKGIGLDLSGLGRSPGSL</variation>
    <location>
        <position position="136"/>
    </location>
</feature>
<feature type="sequence variant" id="VAR_049583" description="In dbSNP:rs2232376." evidence="3">
    <original>A</original>
    <variation>T</variation>
    <location>
        <position position="119"/>
    </location>
</feature>
<feature type="sequence conflict" description="In Ref. 6; AAB50004." evidence="6" ref="6">
    <original>I</original>
    <variation>T</variation>
    <location>
        <position position="181"/>
    </location>
</feature>
<dbReference type="EMBL" id="AF124733">
    <property type="protein sequence ID" value="AAF23887.1"/>
    <property type="molecule type" value="mRNA"/>
</dbReference>
<dbReference type="EMBL" id="AY335941">
    <property type="protein sequence ID" value="AAQ16547.1"/>
    <property type="molecule type" value="Genomic_DNA"/>
</dbReference>
<dbReference type="EMBL" id="AB690778">
    <property type="protein sequence ID" value="BAL44219.1"/>
    <property type="molecule type" value="mRNA"/>
</dbReference>
<dbReference type="EMBL" id="AB690779">
    <property type="protein sequence ID" value="BAL44220.1"/>
    <property type="molecule type" value="mRNA"/>
</dbReference>
<dbReference type="EMBL" id="AB690780">
    <property type="protein sequence ID" value="BAL44221.1"/>
    <property type="molecule type" value="mRNA"/>
</dbReference>
<dbReference type="EMBL" id="AB690781">
    <property type="protein sequence ID" value="BAL44222.1"/>
    <property type="molecule type" value="mRNA"/>
</dbReference>
<dbReference type="EMBL" id="CH471102">
    <property type="protein sequence ID" value="EAX08138.1"/>
    <property type="molecule type" value="Genomic_DNA"/>
</dbReference>
<dbReference type="EMBL" id="CH471102">
    <property type="protein sequence ID" value="EAX08139.1"/>
    <property type="molecule type" value="Genomic_DNA"/>
</dbReference>
<dbReference type="EMBL" id="BC110912">
    <property type="protein sequence ID" value="AAI10913.1"/>
    <property type="molecule type" value="mRNA"/>
</dbReference>
<dbReference type="EMBL" id="BC136505">
    <property type="protein sequence ID" value="AAI36506.1"/>
    <property type="molecule type" value="mRNA"/>
</dbReference>
<dbReference type="EMBL" id="BC136506">
    <property type="protein sequence ID" value="AAI36507.1"/>
    <property type="molecule type" value="mRNA"/>
</dbReference>
<dbReference type="EMBL" id="U90306">
    <property type="protein sequence ID" value="AAB50004.1"/>
    <property type="molecule type" value="mRNA"/>
</dbReference>
<dbReference type="CCDS" id="CCDS3867.1">
    <molecule id="P78413-1"/>
</dbReference>
<dbReference type="CCDS" id="CCDS75225.1">
    <molecule id="P78413-2"/>
</dbReference>
<dbReference type="RefSeq" id="NP_001265561.1">
    <molecule id="P78413-1"/>
    <property type="nucleotide sequence ID" value="NM_001278632.1"/>
</dbReference>
<dbReference type="RefSeq" id="NP_001265562.1">
    <molecule id="P78413-2"/>
    <property type="nucleotide sequence ID" value="NM_001278633.1"/>
</dbReference>
<dbReference type="RefSeq" id="NP_001265563.1">
    <molecule id="P78413-1"/>
    <property type="nucleotide sequence ID" value="NM_001278634.2"/>
</dbReference>
<dbReference type="RefSeq" id="NP_001265564.1">
    <molecule id="P78413-2"/>
    <property type="nucleotide sequence ID" value="NM_001278635.2"/>
</dbReference>
<dbReference type="RefSeq" id="NP_057442.1">
    <molecule id="P78413-1"/>
    <property type="nucleotide sequence ID" value="NM_016358.3"/>
</dbReference>
<dbReference type="SMR" id="P78413"/>
<dbReference type="BioGRID" id="119125">
    <property type="interactions" value="6"/>
</dbReference>
<dbReference type="FunCoup" id="P78413">
    <property type="interactions" value="817"/>
</dbReference>
<dbReference type="IntAct" id="P78413">
    <property type="interactions" value="3"/>
</dbReference>
<dbReference type="STRING" id="9606.ENSP00000482393"/>
<dbReference type="iPTMnet" id="P78413"/>
<dbReference type="PhosphoSitePlus" id="P78413"/>
<dbReference type="BioMuta" id="IRX4"/>
<dbReference type="DMDM" id="12644347"/>
<dbReference type="jPOST" id="P78413"/>
<dbReference type="MassIVE" id="P78413"/>
<dbReference type="PaxDb" id="9606-ENSP00000482393"/>
<dbReference type="PeptideAtlas" id="P78413"/>
<dbReference type="ProteomicsDB" id="57618">
    <molecule id="P78413-1"/>
</dbReference>
<dbReference type="Antibodypedia" id="9116">
    <property type="antibodies" value="66 antibodies from 16 providers"/>
</dbReference>
<dbReference type="DNASU" id="50805"/>
<dbReference type="Ensembl" id="ENST00000231357.7">
    <molecule id="P78413-1"/>
    <property type="protein sequence ID" value="ENSP00000231357.2"/>
    <property type="gene ID" value="ENSG00000113430.11"/>
</dbReference>
<dbReference type="Ensembl" id="ENST00000505790.5">
    <molecule id="P78413-1"/>
    <property type="protein sequence ID" value="ENSP00000423161.1"/>
    <property type="gene ID" value="ENSG00000113430.11"/>
</dbReference>
<dbReference type="Ensembl" id="ENST00000511126.2">
    <molecule id="P78413-2"/>
    <property type="protein sequence ID" value="ENSP00000421772.2"/>
    <property type="gene ID" value="ENSG00000113430.11"/>
</dbReference>
<dbReference type="Ensembl" id="ENST00000513692.5">
    <molecule id="P78413-1"/>
    <property type="protein sequence ID" value="ENSP00000424235.1"/>
    <property type="gene ID" value="ENSG00000113430.11"/>
</dbReference>
<dbReference type="GeneID" id="50805"/>
<dbReference type="KEGG" id="hsa:50805"/>
<dbReference type="MANE-Select" id="ENST00000231357.7">
    <property type="protein sequence ID" value="ENSP00000231357.2"/>
    <property type="RefSeq nucleotide sequence ID" value="NM_016358.3"/>
    <property type="RefSeq protein sequence ID" value="NP_057442.1"/>
</dbReference>
<dbReference type="UCSC" id="uc003jcz.2">
    <molecule id="P78413-1"/>
    <property type="organism name" value="human"/>
</dbReference>
<dbReference type="AGR" id="HGNC:6129"/>
<dbReference type="CTD" id="50805"/>
<dbReference type="DisGeNET" id="50805"/>
<dbReference type="GeneCards" id="IRX4"/>
<dbReference type="HGNC" id="HGNC:6129">
    <property type="gene designation" value="IRX4"/>
</dbReference>
<dbReference type="HPA" id="ENSG00000113430">
    <property type="expression patterns" value="Tissue enhanced (esophagus, heart muscle, skin, vagina)"/>
</dbReference>
<dbReference type="MalaCards" id="IRX4"/>
<dbReference type="MIM" id="606199">
    <property type="type" value="gene"/>
</dbReference>
<dbReference type="neXtProt" id="NX_P78413"/>
<dbReference type="OpenTargets" id="ENSG00000113430"/>
<dbReference type="PharmGKB" id="PA29927"/>
<dbReference type="VEuPathDB" id="HostDB:ENSG00000113430"/>
<dbReference type="eggNOG" id="KOG0773">
    <property type="taxonomic scope" value="Eukaryota"/>
</dbReference>
<dbReference type="GeneTree" id="ENSGT00940000158596"/>
<dbReference type="HOGENOM" id="CLU_042927_1_1_1"/>
<dbReference type="InParanoid" id="P78413"/>
<dbReference type="OMA" id="AEPPGCE"/>
<dbReference type="OrthoDB" id="5399138at2759"/>
<dbReference type="PAN-GO" id="P78413">
    <property type="GO annotations" value="6 GO annotations based on evolutionary models"/>
</dbReference>
<dbReference type="PhylomeDB" id="P78413"/>
<dbReference type="PathwayCommons" id="P78413"/>
<dbReference type="SignaLink" id="P78413"/>
<dbReference type="BioGRID-ORCS" id="50805">
    <property type="hits" value="11 hits in 1166 CRISPR screens"/>
</dbReference>
<dbReference type="ChiTaRS" id="IRX4">
    <property type="organism name" value="human"/>
</dbReference>
<dbReference type="GeneWiki" id="IRX4"/>
<dbReference type="GenomeRNAi" id="50805"/>
<dbReference type="Pharos" id="P78413">
    <property type="development level" value="Tbio"/>
</dbReference>
<dbReference type="PRO" id="PR:P78413"/>
<dbReference type="Proteomes" id="UP000005640">
    <property type="component" value="Chromosome 5"/>
</dbReference>
<dbReference type="RNAct" id="P78413">
    <property type="molecule type" value="protein"/>
</dbReference>
<dbReference type="Bgee" id="ENSG00000113430">
    <property type="expression patterns" value="Expressed in skin of abdomen and 69 other cell types or tissues"/>
</dbReference>
<dbReference type="ExpressionAtlas" id="P78413">
    <property type="expression patterns" value="baseline and differential"/>
</dbReference>
<dbReference type="GO" id="GO:0000785">
    <property type="term" value="C:chromatin"/>
    <property type="evidence" value="ECO:0000247"/>
    <property type="project" value="NTNU_SB"/>
</dbReference>
<dbReference type="GO" id="GO:0005634">
    <property type="term" value="C:nucleus"/>
    <property type="evidence" value="ECO:0000318"/>
    <property type="project" value="GO_Central"/>
</dbReference>
<dbReference type="GO" id="GO:0001228">
    <property type="term" value="F:DNA-binding transcription activator activity, RNA polymerase II-specific"/>
    <property type="evidence" value="ECO:0000318"/>
    <property type="project" value="GO_Central"/>
</dbReference>
<dbReference type="GO" id="GO:0000981">
    <property type="term" value="F:DNA-binding transcription factor activity, RNA polymerase II-specific"/>
    <property type="evidence" value="ECO:0000247"/>
    <property type="project" value="NTNU_SB"/>
</dbReference>
<dbReference type="GO" id="GO:0000978">
    <property type="term" value="F:RNA polymerase II cis-regulatory region sequence-specific DNA binding"/>
    <property type="evidence" value="ECO:0000318"/>
    <property type="project" value="GO_Central"/>
</dbReference>
<dbReference type="GO" id="GO:0048468">
    <property type="term" value="P:cell development"/>
    <property type="evidence" value="ECO:0000318"/>
    <property type="project" value="GO_Central"/>
</dbReference>
<dbReference type="GO" id="GO:0048561">
    <property type="term" value="P:establishment of animal organ orientation"/>
    <property type="evidence" value="ECO:0007669"/>
    <property type="project" value="Ensembl"/>
</dbReference>
<dbReference type="GO" id="GO:0007507">
    <property type="term" value="P:heart development"/>
    <property type="evidence" value="ECO:0000304"/>
    <property type="project" value="ProtInc"/>
</dbReference>
<dbReference type="GO" id="GO:0000122">
    <property type="term" value="P:negative regulation of transcription by RNA polymerase II"/>
    <property type="evidence" value="ECO:0007669"/>
    <property type="project" value="Ensembl"/>
</dbReference>
<dbReference type="GO" id="GO:0030182">
    <property type="term" value="P:neuron differentiation"/>
    <property type="evidence" value="ECO:0000318"/>
    <property type="project" value="GO_Central"/>
</dbReference>
<dbReference type="GO" id="GO:0045893">
    <property type="term" value="P:positive regulation of DNA-templated transcription"/>
    <property type="evidence" value="ECO:0000318"/>
    <property type="project" value="GO_Central"/>
</dbReference>
<dbReference type="GO" id="GO:0006357">
    <property type="term" value="P:regulation of transcription by RNA polymerase II"/>
    <property type="evidence" value="ECO:0000318"/>
    <property type="project" value="GO_Central"/>
</dbReference>
<dbReference type="CDD" id="cd00086">
    <property type="entry name" value="homeodomain"/>
    <property type="match status" value="1"/>
</dbReference>
<dbReference type="FunFam" id="1.10.10.60:FF:000003">
    <property type="entry name" value="Iroquois-class homeobox protein IRX"/>
    <property type="match status" value="1"/>
</dbReference>
<dbReference type="Gene3D" id="1.10.10.60">
    <property type="entry name" value="Homeodomain-like"/>
    <property type="match status" value="1"/>
</dbReference>
<dbReference type="InterPro" id="IPR001356">
    <property type="entry name" value="HD"/>
</dbReference>
<dbReference type="InterPro" id="IPR017970">
    <property type="entry name" value="Homeobox_CS"/>
</dbReference>
<dbReference type="InterPro" id="IPR009057">
    <property type="entry name" value="Homeodomain-like_sf"/>
</dbReference>
<dbReference type="InterPro" id="IPR003893">
    <property type="entry name" value="Iroquois_homeo"/>
</dbReference>
<dbReference type="InterPro" id="IPR008422">
    <property type="entry name" value="KN_HD"/>
</dbReference>
<dbReference type="PANTHER" id="PTHR11211">
    <property type="entry name" value="IROQUOIS-CLASS HOMEODOMAIN PROTEIN IRX"/>
    <property type="match status" value="1"/>
</dbReference>
<dbReference type="PANTHER" id="PTHR11211:SF16">
    <property type="entry name" value="IROQUOIS-CLASS HOMEODOMAIN PROTEIN IRX-4"/>
    <property type="match status" value="1"/>
</dbReference>
<dbReference type="Pfam" id="PF05920">
    <property type="entry name" value="Homeobox_KN"/>
    <property type="match status" value="1"/>
</dbReference>
<dbReference type="SMART" id="SM00389">
    <property type="entry name" value="HOX"/>
    <property type="match status" value="1"/>
</dbReference>
<dbReference type="SMART" id="SM00548">
    <property type="entry name" value="IRO"/>
    <property type="match status" value="1"/>
</dbReference>
<dbReference type="SUPFAM" id="SSF46689">
    <property type="entry name" value="Homeodomain-like"/>
    <property type="match status" value="1"/>
</dbReference>
<dbReference type="PROSITE" id="PS00027">
    <property type="entry name" value="HOMEOBOX_1"/>
    <property type="match status" value="1"/>
</dbReference>
<dbReference type="PROSITE" id="PS50071">
    <property type="entry name" value="HOMEOBOX_2"/>
    <property type="match status" value="1"/>
</dbReference>
<sequence length="519" mass="54445">MSYPQFGYPYSSAPQFLMATNSLSTCCESGGRTLADSGPAASAQAPVYCPVYESRLLATARHELNSAAALGVYGGPYGGSQGYGNYVTYGSEASAFYSLNSFDSKDGSGSAHGGLAPAAAAYYPYEPALGQYPYDRYGTMDSGTRRKNATRETTSTLKAWLQEHRKNPYPTKGEKIMLAIITKMTLTQVSTWFANARRRLKKENKMTWPPRNKCADEKRPYAEGEEEEGGEEEAREEPLKSSKNAEPVGKEEKELELSDLDDFDPLEAEPPACELKPPFHSLDGGLERVPAAPDGPVKEASGALRMSLAAGGGAALDEDLERARSCLRSAAAGPEPLPGAEGGPQVCEAKLGFVPAGASAGLEAKPRIWSLAHTATAAAAAATSLSQTEFPSCMLKRQGPAAPAAVSSAPATSPSVALPHSGALDRHQDSPVTSLRNWVDGVFHDPILRHSTLNQAWATAKGALLDPGPLGRSLGAGANVLTAPLARAFPPAVPQDAPAAGAARELLALPKAGGKPFCA</sequence>